<accession>A0R8L2</accession>
<protein>
    <recommendedName>
        <fullName evidence="1">Large ribosomal subunit protein uL13</fullName>
    </recommendedName>
    <alternativeName>
        <fullName evidence="2">50S ribosomal protein L13</fullName>
    </alternativeName>
</protein>
<sequence>MRTTFMAKANEVERKWYVVDAEGQTLGRLASEVASILRGKNKPTFTPHVDTGDHVIIINAEKIHLTGNKLNDKIYYRHTNHPGGLKQRTALEMRTNYPVQMLELAIKGMLPKGRLGRQVSKKLNVYAGAEHPHQAQKPEVYELRG</sequence>
<dbReference type="EMBL" id="CP000485">
    <property type="protein sequence ID" value="ABK83555.1"/>
    <property type="molecule type" value="Genomic_DNA"/>
</dbReference>
<dbReference type="RefSeq" id="WP_001260793.1">
    <property type="nucleotide sequence ID" value="NC_008600.1"/>
</dbReference>
<dbReference type="SMR" id="A0R8L2"/>
<dbReference type="GeneID" id="93010910"/>
<dbReference type="KEGG" id="btl:BALH_0141"/>
<dbReference type="HOGENOM" id="CLU_082184_2_2_9"/>
<dbReference type="GO" id="GO:0022625">
    <property type="term" value="C:cytosolic large ribosomal subunit"/>
    <property type="evidence" value="ECO:0007669"/>
    <property type="project" value="TreeGrafter"/>
</dbReference>
<dbReference type="GO" id="GO:0003729">
    <property type="term" value="F:mRNA binding"/>
    <property type="evidence" value="ECO:0007669"/>
    <property type="project" value="TreeGrafter"/>
</dbReference>
<dbReference type="GO" id="GO:0003735">
    <property type="term" value="F:structural constituent of ribosome"/>
    <property type="evidence" value="ECO:0007669"/>
    <property type="project" value="InterPro"/>
</dbReference>
<dbReference type="GO" id="GO:0017148">
    <property type="term" value="P:negative regulation of translation"/>
    <property type="evidence" value="ECO:0007669"/>
    <property type="project" value="TreeGrafter"/>
</dbReference>
<dbReference type="GO" id="GO:0006412">
    <property type="term" value="P:translation"/>
    <property type="evidence" value="ECO:0007669"/>
    <property type="project" value="UniProtKB-UniRule"/>
</dbReference>
<dbReference type="CDD" id="cd00392">
    <property type="entry name" value="Ribosomal_L13"/>
    <property type="match status" value="1"/>
</dbReference>
<dbReference type="FunFam" id="3.90.1180.10:FF:000001">
    <property type="entry name" value="50S ribosomal protein L13"/>
    <property type="match status" value="1"/>
</dbReference>
<dbReference type="Gene3D" id="3.90.1180.10">
    <property type="entry name" value="Ribosomal protein L13"/>
    <property type="match status" value="1"/>
</dbReference>
<dbReference type="HAMAP" id="MF_01366">
    <property type="entry name" value="Ribosomal_uL13"/>
    <property type="match status" value="1"/>
</dbReference>
<dbReference type="InterPro" id="IPR005822">
    <property type="entry name" value="Ribosomal_uL13"/>
</dbReference>
<dbReference type="InterPro" id="IPR005823">
    <property type="entry name" value="Ribosomal_uL13_bac-type"/>
</dbReference>
<dbReference type="InterPro" id="IPR023563">
    <property type="entry name" value="Ribosomal_uL13_CS"/>
</dbReference>
<dbReference type="InterPro" id="IPR036899">
    <property type="entry name" value="Ribosomal_uL13_sf"/>
</dbReference>
<dbReference type="NCBIfam" id="TIGR01066">
    <property type="entry name" value="rplM_bact"/>
    <property type="match status" value="1"/>
</dbReference>
<dbReference type="PANTHER" id="PTHR11545:SF2">
    <property type="entry name" value="LARGE RIBOSOMAL SUBUNIT PROTEIN UL13M"/>
    <property type="match status" value="1"/>
</dbReference>
<dbReference type="PANTHER" id="PTHR11545">
    <property type="entry name" value="RIBOSOMAL PROTEIN L13"/>
    <property type="match status" value="1"/>
</dbReference>
<dbReference type="Pfam" id="PF00572">
    <property type="entry name" value="Ribosomal_L13"/>
    <property type="match status" value="1"/>
</dbReference>
<dbReference type="PIRSF" id="PIRSF002181">
    <property type="entry name" value="Ribosomal_L13"/>
    <property type="match status" value="1"/>
</dbReference>
<dbReference type="SUPFAM" id="SSF52161">
    <property type="entry name" value="Ribosomal protein L13"/>
    <property type="match status" value="1"/>
</dbReference>
<dbReference type="PROSITE" id="PS00783">
    <property type="entry name" value="RIBOSOMAL_L13"/>
    <property type="match status" value="1"/>
</dbReference>
<keyword id="KW-0687">Ribonucleoprotein</keyword>
<keyword id="KW-0689">Ribosomal protein</keyword>
<organism>
    <name type="scientific">Bacillus thuringiensis (strain Al Hakam)</name>
    <dbReference type="NCBI Taxonomy" id="412694"/>
    <lineage>
        <taxon>Bacteria</taxon>
        <taxon>Bacillati</taxon>
        <taxon>Bacillota</taxon>
        <taxon>Bacilli</taxon>
        <taxon>Bacillales</taxon>
        <taxon>Bacillaceae</taxon>
        <taxon>Bacillus</taxon>
        <taxon>Bacillus cereus group</taxon>
    </lineage>
</organism>
<comment type="function">
    <text evidence="1">This protein is one of the early assembly proteins of the 50S ribosomal subunit, although it is not seen to bind rRNA by itself. It is important during the early stages of 50S assembly.</text>
</comment>
<comment type="subunit">
    <text evidence="1">Part of the 50S ribosomal subunit.</text>
</comment>
<comment type="similarity">
    <text evidence="1">Belongs to the universal ribosomal protein uL13 family.</text>
</comment>
<proteinExistence type="inferred from homology"/>
<evidence type="ECO:0000255" key="1">
    <source>
        <dbReference type="HAMAP-Rule" id="MF_01366"/>
    </source>
</evidence>
<evidence type="ECO:0000305" key="2"/>
<reference key="1">
    <citation type="journal article" date="2007" name="J. Bacteriol.">
        <title>The complete genome sequence of Bacillus thuringiensis Al Hakam.</title>
        <authorList>
            <person name="Challacombe J.F."/>
            <person name="Altherr M.R."/>
            <person name="Xie G."/>
            <person name="Bhotika S.S."/>
            <person name="Brown N."/>
            <person name="Bruce D."/>
            <person name="Campbell C.S."/>
            <person name="Campbell M.L."/>
            <person name="Chen J."/>
            <person name="Chertkov O."/>
            <person name="Cleland C."/>
            <person name="Dimitrijevic M."/>
            <person name="Doggett N.A."/>
            <person name="Fawcett J.J."/>
            <person name="Glavina T."/>
            <person name="Goodwin L.A."/>
            <person name="Green L.D."/>
            <person name="Han C.S."/>
            <person name="Hill K.K."/>
            <person name="Hitchcock P."/>
            <person name="Jackson P.J."/>
            <person name="Keim P."/>
            <person name="Kewalramani A.R."/>
            <person name="Longmire J."/>
            <person name="Lucas S."/>
            <person name="Malfatti S."/>
            <person name="Martinez D."/>
            <person name="McMurry K."/>
            <person name="Meincke L.J."/>
            <person name="Misra M."/>
            <person name="Moseman B.L."/>
            <person name="Mundt M."/>
            <person name="Munk A.C."/>
            <person name="Okinaka R.T."/>
            <person name="Parson-Quintana B."/>
            <person name="Reilly L.P."/>
            <person name="Richardson P."/>
            <person name="Robinson D.L."/>
            <person name="Saunders E."/>
            <person name="Tapia R."/>
            <person name="Tesmer J.G."/>
            <person name="Thayer N."/>
            <person name="Thompson L.S."/>
            <person name="Tice H."/>
            <person name="Ticknor L.O."/>
            <person name="Wills P.L."/>
            <person name="Gilna P."/>
            <person name="Brettin T.S."/>
        </authorList>
    </citation>
    <scope>NUCLEOTIDE SEQUENCE [LARGE SCALE GENOMIC DNA]</scope>
    <source>
        <strain>Al Hakam</strain>
    </source>
</reference>
<feature type="chain" id="PRO_1000055343" description="Large ribosomal subunit protein uL13">
    <location>
        <begin position="1"/>
        <end position="145"/>
    </location>
</feature>
<name>RL13_BACAH</name>
<gene>
    <name evidence="1" type="primary">rplM</name>
    <name type="ordered locus">BALH_0141</name>
</gene>